<protein>
    <recommendedName>
        <fullName evidence="2">Small ribosomal subunit protein uS12</fullName>
    </recommendedName>
    <alternativeName>
        <fullName evidence="4">30S ribosomal protein S12</fullName>
    </alternativeName>
</protein>
<comment type="function">
    <text evidence="2">With S4 and S5 plays an important role in translational accuracy.</text>
</comment>
<comment type="function">
    <text evidence="2">Interacts with and stabilizes bases of the 16S rRNA that are involved in tRNA selection in the A site and with the mRNA backbone. Located at the interface of the 30S and 50S subunits, it traverses the body of the 30S subunit contacting proteins on the other side and probably holding the rRNA structure together. The combined cluster of proteins S8, S12 and S17 appears to hold together the shoulder and platform of the 30S subunit.</text>
</comment>
<comment type="subunit">
    <text evidence="2">Part of the 30S ribosomal subunit. Contacts proteins S8 and S17. May interact with IF1 in the 30S initiation complex.</text>
</comment>
<comment type="similarity">
    <text evidence="2">Belongs to the universal ribosomal protein uS12 family.</text>
</comment>
<accession>A9WSW8</accession>
<evidence type="ECO:0000250" key="1"/>
<evidence type="ECO:0000255" key="2">
    <source>
        <dbReference type="HAMAP-Rule" id="MF_00403"/>
    </source>
</evidence>
<evidence type="ECO:0000256" key="3">
    <source>
        <dbReference type="SAM" id="MobiDB-lite"/>
    </source>
</evidence>
<evidence type="ECO:0000305" key="4"/>
<proteinExistence type="inferred from homology"/>
<reference key="1">
    <citation type="journal article" date="2008" name="J. Bacteriol.">
        <title>Genome sequence of the fish pathogen Renibacterium salmoninarum suggests reductive evolution away from an environmental Arthrobacter ancestor.</title>
        <authorList>
            <person name="Wiens G.D."/>
            <person name="Rockey D.D."/>
            <person name="Wu Z."/>
            <person name="Chang J."/>
            <person name="Levy R."/>
            <person name="Crane S."/>
            <person name="Chen D.S."/>
            <person name="Capri G.R."/>
            <person name="Burnett J.R."/>
            <person name="Sudheesh P.S."/>
            <person name="Schipma M.J."/>
            <person name="Burd H."/>
            <person name="Bhattacharyya A."/>
            <person name="Rhodes L.D."/>
            <person name="Kaul R."/>
            <person name="Strom M.S."/>
        </authorList>
    </citation>
    <scope>NUCLEOTIDE SEQUENCE [LARGE SCALE GENOMIC DNA]</scope>
    <source>
        <strain>ATCC 33209 / DSM 20767 / JCM 11484 / NBRC 15589 / NCIMB 2235</strain>
    </source>
</reference>
<dbReference type="EMBL" id="CP000910">
    <property type="protein sequence ID" value="ABY23906.1"/>
    <property type="molecule type" value="Genomic_DNA"/>
</dbReference>
<dbReference type="RefSeq" id="WP_012245572.1">
    <property type="nucleotide sequence ID" value="NC_010168.1"/>
</dbReference>
<dbReference type="SMR" id="A9WSW8"/>
<dbReference type="STRING" id="288705.RSal33209_2174"/>
<dbReference type="KEGG" id="rsa:RSal33209_2174"/>
<dbReference type="eggNOG" id="COG0048">
    <property type="taxonomic scope" value="Bacteria"/>
</dbReference>
<dbReference type="HOGENOM" id="CLU_104295_1_2_11"/>
<dbReference type="Proteomes" id="UP000002007">
    <property type="component" value="Chromosome"/>
</dbReference>
<dbReference type="GO" id="GO:0015935">
    <property type="term" value="C:small ribosomal subunit"/>
    <property type="evidence" value="ECO:0007669"/>
    <property type="project" value="InterPro"/>
</dbReference>
<dbReference type="GO" id="GO:0019843">
    <property type="term" value="F:rRNA binding"/>
    <property type="evidence" value="ECO:0007669"/>
    <property type="project" value="UniProtKB-UniRule"/>
</dbReference>
<dbReference type="GO" id="GO:0003735">
    <property type="term" value="F:structural constituent of ribosome"/>
    <property type="evidence" value="ECO:0007669"/>
    <property type="project" value="InterPro"/>
</dbReference>
<dbReference type="GO" id="GO:0000049">
    <property type="term" value="F:tRNA binding"/>
    <property type="evidence" value="ECO:0007669"/>
    <property type="project" value="UniProtKB-UniRule"/>
</dbReference>
<dbReference type="GO" id="GO:0006412">
    <property type="term" value="P:translation"/>
    <property type="evidence" value="ECO:0007669"/>
    <property type="project" value="UniProtKB-UniRule"/>
</dbReference>
<dbReference type="CDD" id="cd03368">
    <property type="entry name" value="Ribosomal_S12"/>
    <property type="match status" value="1"/>
</dbReference>
<dbReference type="FunFam" id="2.40.50.140:FF:000001">
    <property type="entry name" value="30S ribosomal protein S12"/>
    <property type="match status" value="1"/>
</dbReference>
<dbReference type="Gene3D" id="2.40.50.140">
    <property type="entry name" value="Nucleic acid-binding proteins"/>
    <property type="match status" value="1"/>
</dbReference>
<dbReference type="HAMAP" id="MF_00403_B">
    <property type="entry name" value="Ribosomal_uS12_B"/>
    <property type="match status" value="1"/>
</dbReference>
<dbReference type="InterPro" id="IPR012340">
    <property type="entry name" value="NA-bd_OB-fold"/>
</dbReference>
<dbReference type="InterPro" id="IPR006032">
    <property type="entry name" value="Ribosomal_uS12"/>
</dbReference>
<dbReference type="InterPro" id="IPR005679">
    <property type="entry name" value="Ribosomal_uS12_bac"/>
</dbReference>
<dbReference type="NCBIfam" id="TIGR00981">
    <property type="entry name" value="rpsL_bact"/>
    <property type="match status" value="1"/>
</dbReference>
<dbReference type="PANTHER" id="PTHR11652">
    <property type="entry name" value="30S RIBOSOMAL PROTEIN S12 FAMILY MEMBER"/>
    <property type="match status" value="1"/>
</dbReference>
<dbReference type="Pfam" id="PF00164">
    <property type="entry name" value="Ribosom_S12_S23"/>
    <property type="match status" value="1"/>
</dbReference>
<dbReference type="PIRSF" id="PIRSF002133">
    <property type="entry name" value="Ribosomal_S12/S23"/>
    <property type="match status" value="1"/>
</dbReference>
<dbReference type="PRINTS" id="PR01034">
    <property type="entry name" value="RIBOSOMALS12"/>
</dbReference>
<dbReference type="SUPFAM" id="SSF50249">
    <property type="entry name" value="Nucleic acid-binding proteins"/>
    <property type="match status" value="1"/>
</dbReference>
<dbReference type="PROSITE" id="PS00055">
    <property type="entry name" value="RIBOSOMAL_S12"/>
    <property type="match status" value="1"/>
</dbReference>
<sequence>MPTINQLVRKGRSPKVAKTKAPALKNNPMRRGVCTRVYTTTPKKPNSALRKVARVRLAGGIEVTAYIPGVGHNLQEHSIVLVRGGRVKDLPGVRYKIVRGSLDTQGVKNRKQARSKYGAKMEKK</sequence>
<feature type="chain" id="PRO_1000080410" description="Small ribosomal subunit protein uS12">
    <location>
        <begin position="1"/>
        <end position="124"/>
    </location>
</feature>
<feature type="region of interest" description="Disordered" evidence="3">
    <location>
        <begin position="105"/>
        <end position="124"/>
    </location>
</feature>
<feature type="modified residue" description="3-methylthioaspartic acid" evidence="1">
    <location>
        <position position="89"/>
    </location>
</feature>
<name>RS12_RENSM</name>
<gene>
    <name evidence="2" type="primary">rpsL</name>
    <name type="ordered locus">RSal33209_2174</name>
</gene>
<keyword id="KW-0488">Methylation</keyword>
<keyword id="KW-1185">Reference proteome</keyword>
<keyword id="KW-0687">Ribonucleoprotein</keyword>
<keyword id="KW-0689">Ribosomal protein</keyword>
<keyword id="KW-0694">RNA-binding</keyword>
<keyword id="KW-0699">rRNA-binding</keyword>
<keyword id="KW-0820">tRNA-binding</keyword>
<organism>
    <name type="scientific">Renibacterium salmoninarum (strain ATCC 33209 / DSM 20767 / JCM 11484 / NBRC 15589 / NCIMB 2235)</name>
    <dbReference type="NCBI Taxonomy" id="288705"/>
    <lineage>
        <taxon>Bacteria</taxon>
        <taxon>Bacillati</taxon>
        <taxon>Actinomycetota</taxon>
        <taxon>Actinomycetes</taxon>
        <taxon>Micrococcales</taxon>
        <taxon>Micrococcaceae</taxon>
        <taxon>Renibacterium</taxon>
    </lineage>
</organism>